<keyword id="KW-0997">Cell inner membrane</keyword>
<keyword id="KW-1003">Cell membrane</keyword>
<keyword id="KW-0472">Membrane</keyword>
<keyword id="KW-0520">NAD</keyword>
<keyword id="KW-0874">Quinone</keyword>
<keyword id="KW-1185">Reference proteome</keyword>
<keyword id="KW-1278">Translocase</keyword>
<keyword id="KW-0813">Transport</keyword>
<keyword id="KW-0830">Ubiquinone</keyword>
<gene>
    <name evidence="1" type="primary">nuoD</name>
    <name type="ordered locus">Oant_2420</name>
</gene>
<comment type="function">
    <text evidence="1">NDH-1 shuttles electrons from NADH, via FMN and iron-sulfur (Fe-S) centers, to quinones in the respiratory chain. The immediate electron acceptor for the enzyme in this species is believed to be ubiquinone. Couples the redox reaction to proton translocation (for every two electrons transferred, four hydrogen ions are translocated across the cytoplasmic membrane), and thus conserves the redox energy in a proton gradient.</text>
</comment>
<comment type="catalytic activity">
    <reaction evidence="1">
        <text>a quinone + NADH + 5 H(+)(in) = a quinol + NAD(+) + 4 H(+)(out)</text>
        <dbReference type="Rhea" id="RHEA:57888"/>
        <dbReference type="ChEBI" id="CHEBI:15378"/>
        <dbReference type="ChEBI" id="CHEBI:24646"/>
        <dbReference type="ChEBI" id="CHEBI:57540"/>
        <dbReference type="ChEBI" id="CHEBI:57945"/>
        <dbReference type="ChEBI" id="CHEBI:132124"/>
    </reaction>
</comment>
<comment type="subunit">
    <text evidence="1">NDH-1 is composed of 14 different subunits. Subunits NuoB, C, D, E, F, and G constitute the peripheral sector of the complex.</text>
</comment>
<comment type="subcellular location">
    <subcellularLocation>
        <location evidence="1">Cell inner membrane</location>
        <topology evidence="1">Peripheral membrane protein</topology>
        <orientation evidence="1">Cytoplasmic side</orientation>
    </subcellularLocation>
</comment>
<comment type="similarity">
    <text evidence="1">Belongs to the complex I 49 kDa subunit family.</text>
</comment>
<accession>A6X1N0</accession>
<sequence length="396" mass="44882">MAETQVRNFNINFGPQHPAAHGVLRLVLELDGEVVERVDPHIGLLHRGTEKLMEAKTYLQALPYLDRLDYVAPMNQEHAYALAVERLLGIDVPKRGQLIRVLYSEIGRILNHLLNVTTQAMDVGALTPPLWGFEEREKLMVFYERACGARMHAAYFRPGGVHQDLPDQLVEDIGKWIDPFFNTLNNLDDLITPNRIFKQRNVDIGVVKLEDAWAWGFSGVMVRGSGAAWDLRKSQPYECYNEMEFDIPIGKNGDCYDRYLIRMEEMRQSARIMRQCVDLLLGKERVGPVSNADNKIVPPKRGEMKRSMEALIHHFKLYTEGYHVPAGEVYAAVEAPKGEFGVFLVSDGSNKPYRCKLRAPGFAHLQAMDFLCRGHMLADVSAILGSLDIVFGEVDR</sequence>
<name>NUOD_BRUA4</name>
<organism>
    <name type="scientific">Brucella anthropi (strain ATCC 49188 / DSM 6882 / CCUG 24695 / JCM 21032 / LMG 3331 / NBRC 15819 / NCTC 12168 / Alc 37)</name>
    <name type="common">Ochrobactrum anthropi</name>
    <dbReference type="NCBI Taxonomy" id="439375"/>
    <lineage>
        <taxon>Bacteria</taxon>
        <taxon>Pseudomonadati</taxon>
        <taxon>Pseudomonadota</taxon>
        <taxon>Alphaproteobacteria</taxon>
        <taxon>Hyphomicrobiales</taxon>
        <taxon>Brucellaceae</taxon>
        <taxon>Brucella/Ochrobactrum group</taxon>
        <taxon>Brucella</taxon>
    </lineage>
</organism>
<reference key="1">
    <citation type="journal article" date="2011" name="J. Bacteriol.">
        <title>Genome of Ochrobactrum anthropi ATCC 49188 T, a versatile opportunistic pathogen and symbiont of several eukaryotic hosts.</title>
        <authorList>
            <person name="Chain P.S."/>
            <person name="Lang D.M."/>
            <person name="Comerci D.J."/>
            <person name="Malfatti S.A."/>
            <person name="Vergez L.M."/>
            <person name="Shin M."/>
            <person name="Ugalde R.A."/>
            <person name="Garcia E."/>
            <person name="Tolmasky M.E."/>
        </authorList>
    </citation>
    <scope>NUCLEOTIDE SEQUENCE [LARGE SCALE GENOMIC DNA]</scope>
    <source>
        <strain>ATCC 49188 / DSM 6882 / CCUG 24695 / JCM 21032 / LMG 3331 / NBRC 15819 / NCTC 12168 / Alc 37</strain>
    </source>
</reference>
<evidence type="ECO:0000255" key="1">
    <source>
        <dbReference type="HAMAP-Rule" id="MF_01358"/>
    </source>
</evidence>
<proteinExistence type="inferred from homology"/>
<feature type="chain" id="PRO_0000357878" description="NADH-quinone oxidoreductase subunit D">
    <location>
        <begin position="1"/>
        <end position="396"/>
    </location>
</feature>
<protein>
    <recommendedName>
        <fullName evidence="1">NADH-quinone oxidoreductase subunit D</fullName>
        <ecNumber evidence="1">7.1.1.-</ecNumber>
    </recommendedName>
    <alternativeName>
        <fullName evidence="1">NADH dehydrogenase I subunit D</fullName>
    </alternativeName>
    <alternativeName>
        <fullName evidence="1">NDH-1 subunit D</fullName>
    </alternativeName>
</protein>
<dbReference type="EC" id="7.1.1.-" evidence="1"/>
<dbReference type="EMBL" id="CP000758">
    <property type="protein sequence ID" value="ABS15134.1"/>
    <property type="molecule type" value="Genomic_DNA"/>
</dbReference>
<dbReference type="RefSeq" id="WP_010661175.1">
    <property type="nucleotide sequence ID" value="NC_009667.1"/>
</dbReference>
<dbReference type="SMR" id="A6X1N0"/>
<dbReference type="STRING" id="439375.Oant_2420"/>
<dbReference type="KEGG" id="oan:Oant_2420"/>
<dbReference type="eggNOG" id="COG0649">
    <property type="taxonomic scope" value="Bacteria"/>
</dbReference>
<dbReference type="HOGENOM" id="CLU_015134_1_1_5"/>
<dbReference type="PhylomeDB" id="A6X1N0"/>
<dbReference type="Proteomes" id="UP000002301">
    <property type="component" value="Chromosome 1"/>
</dbReference>
<dbReference type="GO" id="GO:0005886">
    <property type="term" value="C:plasma membrane"/>
    <property type="evidence" value="ECO:0007669"/>
    <property type="project" value="UniProtKB-SubCell"/>
</dbReference>
<dbReference type="GO" id="GO:0051287">
    <property type="term" value="F:NAD binding"/>
    <property type="evidence" value="ECO:0007669"/>
    <property type="project" value="InterPro"/>
</dbReference>
<dbReference type="GO" id="GO:0050136">
    <property type="term" value="F:NADH:ubiquinone reductase (non-electrogenic) activity"/>
    <property type="evidence" value="ECO:0007669"/>
    <property type="project" value="UniProtKB-UniRule"/>
</dbReference>
<dbReference type="GO" id="GO:0048038">
    <property type="term" value="F:quinone binding"/>
    <property type="evidence" value="ECO:0007669"/>
    <property type="project" value="UniProtKB-KW"/>
</dbReference>
<dbReference type="FunFam" id="1.10.645.10:FF:000005">
    <property type="entry name" value="NADH-quinone oxidoreductase subunit D"/>
    <property type="match status" value="1"/>
</dbReference>
<dbReference type="Gene3D" id="1.10.645.10">
    <property type="entry name" value="Cytochrome-c3 Hydrogenase, chain B"/>
    <property type="match status" value="1"/>
</dbReference>
<dbReference type="HAMAP" id="MF_01358">
    <property type="entry name" value="NDH1_NuoD"/>
    <property type="match status" value="1"/>
</dbReference>
<dbReference type="InterPro" id="IPR001135">
    <property type="entry name" value="NADH_Q_OxRdtase_suD"/>
</dbReference>
<dbReference type="InterPro" id="IPR014029">
    <property type="entry name" value="NADH_UbQ_OxRdtase_49kDa_CS"/>
</dbReference>
<dbReference type="InterPro" id="IPR022885">
    <property type="entry name" value="NDH1_su_D/H"/>
</dbReference>
<dbReference type="InterPro" id="IPR029014">
    <property type="entry name" value="NiFe-Hase_large"/>
</dbReference>
<dbReference type="NCBIfam" id="TIGR01962">
    <property type="entry name" value="NuoD"/>
    <property type="match status" value="1"/>
</dbReference>
<dbReference type="NCBIfam" id="NF004739">
    <property type="entry name" value="PRK06075.1"/>
    <property type="match status" value="1"/>
</dbReference>
<dbReference type="PANTHER" id="PTHR11993:SF10">
    <property type="entry name" value="NADH DEHYDROGENASE [UBIQUINONE] IRON-SULFUR PROTEIN 2, MITOCHONDRIAL"/>
    <property type="match status" value="1"/>
</dbReference>
<dbReference type="PANTHER" id="PTHR11993">
    <property type="entry name" value="NADH-UBIQUINONE OXIDOREDUCTASE 49 KDA SUBUNIT"/>
    <property type="match status" value="1"/>
</dbReference>
<dbReference type="Pfam" id="PF00346">
    <property type="entry name" value="Complex1_49kDa"/>
    <property type="match status" value="1"/>
</dbReference>
<dbReference type="SUPFAM" id="SSF56762">
    <property type="entry name" value="HydB/Nqo4-like"/>
    <property type="match status" value="1"/>
</dbReference>
<dbReference type="PROSITE" id="PS00535">
    <property type="entry name" value="COMPLEX1_49K"/>
    <property type="match status" value="1"/>
</dbReference>